<evidence type="ECO:0000250" key="1">
    <source>
        <dbReference type="UniProtKB" id="Q8I0U8"/>
    </source>
</evidence>
<evidence type="ECO:0000255" key="2"/>
<evidence type="ECO:0000256" key="3">
    <source>
        <dbReference type="SAM" id="MobiDB-lite"/>
    </source>
</evidence>
<evidence type="ECO:0000269" key="4">
    <source>
    </source>
</evidence>
<evidence type="ECO:0000303" key="5">
    <source>
    </source>
</evidence>
<keyword id="KW-1003">Cell membrane</keyword>
<keyword id="KW-1015">Disulfide bond</keyword>
<keyword id="KW-0245">EGF-like domain</keyword>
<keyword id="KW-0325">Glycoprotein</keyword>
<keyword id="KW-0336">GPI-anchor</keyword>
<keyword id="KW-0449">Lipoprotein</keyword>
<keyword id="KW-0461">Malaria</keyword>
<keyword id="KW-0472">Membrane</keyword>
<keyword id="KW-0477">Merozoite</keyword>
<keyword id="KW-0677">Repeat</keyword>
<keyword id="KW-0964">Secreted</keyword>
<keyword id="KW-0732">Signal</keyword>
<keyword id="KW-0926">Vacuole</keyword>
<proteinExistence type="evidence at transcript level"/>
<dbReference type="EMBL" id="M19143">
    <property type="protein sequence ID" value="AAA29653.1"/>
    <property type="molecule type" value="mRNA"/>
</dbReference>
<dbReference type="PIR" id="A54498">
    <property type="entry name" value="A54498"/>
</dbReference>
<dbReference type="BMRB" id="P13819"/>
<dbReference type="SMR" id="P13819"/>
<dbReference type="GlyCosmos" id="P13819">
    <property type="glycosylation" value="13 sites, No reported glycans"/>
</dbReference>
<dbReference type="GO" id="GO:0005576">
    <property type="term" value="C:extracellular region"/>
    <property type="evidence" value="ECO:0007669"/>
    <property type="project" value="UniProtKB-SubCell"/>
</dbReference>
<dbReference type="GO" id="GO:0005886">
    <property type="term" value="C:plasma membrane"/>
    <property type="evidence" value="ECO:0007669"/>
    <property type="project" value="UniProtKB-SubCell"/>
</dbReference>
<dbReference type="GO" id="GO:0098552">
    <property type="term" value="C:side of membrane"/>
    <property type="evidence" value="ECO:0007669"/>
    <property type="project" value="UniProtKB-KW"/>
</dbReference>
<dbReference type="GO" id="GO:0005774">
    <property type="term" value="C:vacuolar membrane"/>
    <property type="evidence" value="ECO:0007669"/>
    <property type="project" value="UniProtKB-SubCell"/>
</dbReference>
<dbReference type="Gene3D" id="2.10.25.10">
    <property type="entry name" value="Laminin"/>
    <property type="match status" value="2"/>
</dbReference>
<dbReference type="InterPro" id="IPR010901">
    <property type="entry name" value="MSP1_C"/>
</dbReference>
<dbReference type="InterPro" id="IPR024730">
    <property type="entry name" value="MSP1_EGF_1"/>
</dbReference>
<dbReference type="Pfam" id="PF12946">
    <property type="entry name" value="EGF_MSP1_1"/>
    <property type="match status" value="1"/>
</dbReference>
<dbReference type="Pfam" id="PF07462">
    <property type="entry name" value="MSP1_C"/>
    <property type="match status" value="1"/>
</dbReference>
<dbReference type="SUPFAM" id="SSF57196">
    <property type="entry name" value="EGF/Laminin"/>
    <property type="match status" value="2"/>
</dbReference>
<accession>P13819</accession>
<comment type="function">
    <text evidence="1">During the asexual blood stage, involved in merozoite egress from host erythrocytes possibly via its interaction with the host cytoskeleton protein spectrin resulting in the destabilization of the host cytoskeleton and thus leading to erythrocyte cell membrane rupture. Involved in the binding to host erythrocytes and is required for host erythrocyte invasion.</text>
</comment>
<comment type="function">
    <molecule>p33 subunit</molecule>
    <text evidence="1">By binding to host proinflammatory cytokine S100P may interfere with host immune responses.</text>
</comment>
<comment type="function">
    <molecule>p19 subunit</molecule>
    <text evidence="1">Involved in merozoite invasion of host erythrocytes. May play a role in the biogenesis and/or function of the food vacuole during the intraerythrocytic development.</text>
</comment>
<comment type="subunit">
    <text evidence="1">Forms a complex composed of subunits p83, p30, p38, and p42 which remain non-covalently associated; the complex is formed at the merozoite surface prior to egress from host erythrocytes. Forms a complex composed of processed MSP1 subunits, MSP6 subunit p36 and MSP7; the complex is formed at the merozoite surface prior to egress from host erythrocytes. Within the complex, interacts (via subunit p38) with MSP6 subunit p36 and (via subunits p83, p30 and p38) with MSP7 (via subunit p22). Forms a complex composed of MSP1, MSP6, DBLMSP1 and DBLMSP2. Within the complex, interacts (via subunit p38) with DBLMSP1 and DBLMSP2. Forms a complex composed of MSP1, and rhoptry proteins RhopH3, RAP1 and CLAG9/RhopH3. Within the complex, interacts (via subunits p42 and p19) with RhopH3 (via C-terminus). Forms a complex composed of MSP1, MSP6, MSP7, MSP9 and MSP3; within the complex, MSP6 and MSP9 mediate the binding to the host erythrocyte. Interacts (via subunits p19 and p42) with MSP9; the interaction is direct; MSP1 subunits p19 or p42, and MSP9 form a co-ligand complex that interacts with host SLC4A1/Band 3 protein. May interact with PFD6. Interacts with host spectrin.</text>
</comment>
<comment type="subunit">
    <molecule>p83 subunit</molecule>
    <text evidence="1">Interacts with host glycophorin GYPA in a sialic acid-independent manner.</text>
</comment>
<comment type="subunit">
    <molecule>p33 subunit</molecule>
    <text evidence="1">Interacts with host proinflammatory cytokine S100P; the interaction blocks S100P inflammatory and chemotactic activities.</text>
</comment>
<comment type="subunit">
    <molecule>p42 subunit</molecule>
    <text evidence="1">Interacts with host SLC4A1/Band 3 (via 5ABC region) on the host erythrocyte surface in a sialic acid-independent manner.</text>
</comment>
<comment type="subcellular location">
    <subcellularLocation>
        <location evidence="1">Cell membrane</location>
        <topology evidence="2">Lipid-anchor</topology>
        <topology evidence="2">GPI-anchor</topology>
    </subcellularLocation>
    <subcellularLocation>
        <location evidence="1">Secreted</location>
    </subcellularLocation>
</comment>
<comment type="subcellular location">
    <molecule>p19 subunit</molecule>
    <subcellularLocation>
        <location evidence="1">Cell membrane</location>
        <topology evidence="2">Lipid-anchor</topology>
        <topology evidence="2">GPI-anchor</topology>
    </subcellularLocation>
    <subcellularLocation>
        <location evidence="1">Vacuole membrane</location>
        <topology evidence="2">Lipid-anchor</topology>
        <topology evidence="2">GPI-anchor</topology>
    </subcellularLocation>
    <text evidence="1">In free merozoites, localizes to the cell membrane (By similarity). Following merozoite invasion of host erythrocytes, p19 subunit is endocytosed into small food vacuoles in the ring stage and persists throughout the subsequent intra-erythrocytic stages at the surface of the food vacuole where it forms clusters (By similarity).</text>
</comment>
<comment type="PTM">
    <text evidence="1">The p190 precursor is cleaved by SUB1 prior to merozoite egress into 4 subunits p83, p30, p38, and p42 which remain non-covalently associated. SUB1-mediated proteolytic cleavage occurs in an orderly manner; the first cleavage occurs at the p30/p38 site, followed by cleavage at the p83/p30 site, in the 3D7 strain a second cleavage occurs at the N-terminus of p83, the last cleavage occurs at the p38/p42 site. The order of cleavage is essential for parasite viability. SUB1-mediated processing is essential for merozoite egress. In a second processing step during erythrocyte invasion, p42 is cleaved by SUB2 into p33 and p19; the latter remains attached to the merozoite surface via its GPI-anchor and is endocytosed during the subsequent ring stage.</text>
</comment>
<comment type="polymorphism">
    <text evidence="4">The sequence varies across Plasmodium strains (PubMed:2449612). There are two major dimorphic forms of MSP1, typified by those expressed by the 3D7 and Wellcome P.falciparum isolates (PubMed:2449612).</text>
</comment>
<protein>
    <recommendedName>
        <fullName evidence="1">Merozoite surface protein 1</fullName>
    </recommendedName>
    <alternativeName>
        <fullName evidence="5">Merozoite surface antigen</fullName>
    </alternativeName>
    <alternativeName>
        <fullName evidence="5">PMMSA</fullName>
    </alternativeName>
    <component>
        <recommendedName>
            <fullName evidence="1">p83 subunit</fullName>
        </recommendedName>
    </component>
    <component>
        <recommendedName>
            <fullName evidence="1">p30 subunit</fullName>
        </recommendedName>
    </component>
    <component>
        <recommendedName>
            <fullName evidence="1">p38 subunit</fullName>
        </recommendedName>
    </component>
    <component>
        <recommendedName>
            <fullName evidence="1">p42 subunit</fullName>
        </recommendedName>
    </component>
    <component>
        <recommendedName>
            <fullName evidence="1">p33 subunit</fullName>
        </recommendedName>
    </component>
    <component>
        <recommendedName>
            <fullName evidence="1">p19 subunit</fullName>
        </recommendedName>
    </component>
</protein>
<gene>
    <name evidence="1" type="primary">MSP1</name>
</gene>
<name>MSP1_PLAFF</name>
<organism>
    <name type="scientific">Plasmodium falciparum (isolate FC27 / Papua New Guinea)</name>
    <dbReference type="NCBI Taxonomy" id="5837"/>
    <lineage>
        <taxon>Eukaryota</taxon>
        <taxon>Sar</taxon>
        <taxon>Alveolata</taxon>
        <taxon>Apicomplexa</taxon>
        <taxon>Aconoidasida</taxon>
        <taxon>Haemosporida</taxon>
        <taxon>Plasmodiidae</taxon>
        <taxon>Plasmodium</taxon>
        <taxon>Plasmodium (Laverania)</taxon>
    </lineage>
</organism>
<sequence>MKIIFFLCSFLFFIINTQCVTHESYQELVKKLEALEDAVLTGYSLFQKEKMVLNEGTSGTAVTTSTPGSSGSVTSGGSVASVASVASGGSGGSVASGGSGNSRRTNPSDNSSDSNTKTYADLKHRVQNYLFTIKELKYPELFDLTNHMLTLSKNVDGFKYLIDGYEEINELLYKLNFYYDLLRAKLNDACANSYCQIPFNLKIRANELDVLKKIVFGYRKPLDNIKDNVGKMEDYIKKNKTTIANINELIEGSKKTIDQNKNADNEEGKKKLYQAQYNLFIYNKQLQEAHNLISVLEKRIDTLKKNENIKKLLEDIDKIKTDAENPTTGSKPNPLPENKKKEVEGHEEKIKEIAKTIKFNIDSLFTDPLELEYYLREKNKKVDVTPKSQDPTKSVQIPKVPYPNGIVYPLPLTDIHNSLAADNDKNSYGDLMNPDTKEKINEKIITDNKERKIFINNIKKQIDLEEKNINHTKEQNKKLLEDYEKSKKDYEELLEKFYEMKFNNNFDKDVVDKIFSARYTYNVEKQRYNNKFSSSNNSVYNVQKLKKALSYLEDYSLRKGISEKDFNHYYTLKTGLEADIKKLTEEIKSSENKILEKNFKGLTHSANASLEVSDIVKLQVQKVLLIKKIEDLRKIELFLKNAQLKDSIHVPNIYKPQNKPEPYYLIVLKKEVDKLKEFIPKVKDMLKKEQAVLSSITQPLVAASETTEDGGHSTHTLSQSGETEVTEETEVTEETVGHTTTVTITLPPKEESAPKEVKVVENSIEHKSNDNSQALTKTVYLKKLDEFLTKSYICHKYILVSNSSMDQKLLEVYNLTPEEENELKSCDPLDLLFNIQNNIPAMYSLYDSMNIDLQHLFFELYQKEMIYYLHKLKEENHIKKLLEEQKQITGTSSTSSPGNTTVNTAQSATHSNSQNQQSNASSTNTQNGVAVSSGPAVVEESHDPLTVLSISNDLKGIVSLLNLGNKTKVPNPLTISTTEMEKFYENILKNNDTYFNDDIKQFVKSNSKVITGLTETQKNALNDEIKKLKDTLQLSFDLYNKYKLKLDRLFNKKKELGQDKMQIKKLTLLKEQLESKLNSLNNPHNVLQNFSVFFNKKKEAEIAETENTLENTKILLKHYKGLVKYYNGESSPLKTLSEVSIQTEDNYANLEKFRALSKIDGKLNDNLHLGKKKLSFLSSGLHHLITELKEVIKNKNYTGNSPSENNKKVNEALKSYENFLPEAKVTTVVTPPQPDVTPSPLSVRVSGSSGSTKEETQIPTSGSLLTELQQVVQLQNYDEEDDSLVVLPIFGESEDNDEYLDQVVTGEAISVTMDNILSGFENEYDVIYLKPLAGVYRSLKKQIEKNIITFNLNLNDILNSRLKKRKYFLDVLESDLMQFKHISSNEYIIEDSFKLLNSEQKNTLLKSYKYIKESVENDIKFAQEGISYYEKVLAKYKDDLESIKKVIKEEKEKFPSSPPTTPPSPAKTDEQKKESKFLPFLTNIETLYNNLVNKIDDYLINLKAKINDCNVEKDEAHVKITKLSDLKAIDDKIDLFKNTNDFEAIKKLINDDTKKDMLGKLLSTGLVQNFPNTIISKLIEGKFQDMLNISQHQCVKKQCPENSGCFRHLDEREECKCLLNYKQEGDKCVENPNPTCNENNGGCDADATCTEEDSGSSRKKITCECTKPDSYPLFDGIFCSSSNFLGISFLLILMLILYSFI</sequence>
<feature type="signal peptide" evidence="2">
    <location>
        <begin position="1"/>
        <end position="19"/>
    </location>
</feature>
<feature type="chain" id="PRO_0000024550" description="Merozoite surface protein 1">
    <location>
        <begin position="20"/>
        <end position="1680"/>
    </location>
</feature>
<feature type="chain" id="PRO_0000459260" description="p83 subunit" evidence="1">
    <location>
        <begin position="20"/>
        <end position="703"/>
    </location>
</feature>
<feature type="chain" id="PRO_0000459261" description="p30 subunit" evidence="1">
    <location>
        <begin position="704"/>
        <end position="891"/>
    </location>
</feature>
<feature type="chain" id="PRO_0000459262" description="p38 subunit" evidence="1">
    <location>
        <begin position="892"/>
        <end position="1307"/>
    </location>
</feature>
<feature type="chain" id="PRO_0000459263" description="p42 subunit" evidence="1">
    <location>
        <begin position="1308"/>
        <end position="1680"/>
    </location>
</feature>
<feature type="chain" id="PRO_0000459264" description="p33 subunit" evidence="1">
    <location>
        <begin position="1308"/>
        <end position="1587"/>
    </location>
</feature>
<feature type="chain" id="PRO_0000459265" description="p19 subunit" evidence="1">
    <location>
        <begin position="1588"/>
        <end position="1680"/>
    </location>
</feature>
<feature type="propeptide" id="PRO_0000024551" description="Removed in mature form" evidence="2">
    <location>
        <begin position="1681"/>
        <end position="1701"/>
    </location>
</feature>
<feature type="domain" description="EGF-like 1" evidence="1">
    <location>
        <begin position="1592"/>
        <end position="1632"/>
    </location>
</feature>
<feature type="domain" description="EGF-like 2" evidence="1">
    <location>
        <begin position="1633"/>
        <end position="1680"/>
    </location>
</feature>
<feature type="region of interest" description="Disordered" evidence="3">
    <location>
        <begin position="89"/>
        <end position="118"/>
    </location>
</feature>
<feature type="region of interest" description="Disordered" evidence="3">
    <location>
        <begin position="322"/>
        <end position="344"/>
    </location>
</feature>
<feature type="region of interest" description="Disordered" evidence="3">
    <location>
        <begin position="704"/>
        <end position="739"/>
    </location>
</feature>
<feature type="region of interest" description="Disordered" evidence="3">
    <location>
        <begin position="889"/>
        <end position="936"/>
    </location>
</feature>
<feature type="region of interest" description="Disordered" evidence="3">
    <location>
        <begin position="1231"/>
        <end position="1259"/>
    </location>
</feature>
<feature type="region of interest" description="Disordered" evidence="3">
    <location>
        <begin position="1451"/>
        <end position="1472"/>
    </location>
</feature>
<feature type="compositionally biased region" description="Gly residues" evidence="3">
    <location>
        <begin position="89"/>
        <end position="100"/>
    </location>
</feature>
<feature type="compositionally biased region" description="Low complexity" evidence="3">
    <location>
        <begin position="101"/>
        <end position="116"/>
    </location>
</feature>
<feature type="compositionally biased region" description="Acidic residues" evidence="3">
    <location>
        <begin position="724"/>
        <end position="733"/>
    </location>
</feature>
<feature type="compositionally biased region" description="Low complexity" evidence="3">
    <location>
        <begin position="889"/>
        <end position="927"/>
    </location>
</feature>
<feature type="compositionally biased region" description="Polar residues" evidence="3">
    <location>
        <begin position="1245"/>
        <end position="1259"/>
    </location>
</feature>
<feature type="compositionally biased region" description="Pro residues" evidence="3">
    <location>
        <begin position="1456"/>
        <end position="1465"/>
    </location>
</feature>
<feature type="lipid moiety-binding region" description="GPI-anchor amidated serine" evidence="2">
    <location>
        <position position="1680"/>
    </location>
</feature>
<feature type="glycosylation site" description="N-linked (GlcNAc...) asparagine" evidence="2">
    <location>
        <position position="110"/>
    </location>
</feature>
<feature type="glycosylation site" description="N-linked (GlcNAc...) asparagine" evidence="2">
    <location>
        <position position="239"/>
    </location>
</feature>
<feature type="glycosylation site" description="N-linked (GlcNAc...) asparagine" evidence="2">
    <location>
        <position position="470"/>
    </location>
</feature>
<feature type="glycosylation site" description="N-linked (GlcNAc...) asparagine" evidence="2">
    <location>
        <position position="536"/>
    </location>
</feature>
<feature type="glycosylation site" description="N-linked (GlcNAc...) asparagine" evidence="2">
    <location>
        <position position="607"/>
    </location>
</feature>
<feature type="glycosylation site" description="N-linked (GlcNAc...) asparagine" evidence="2">
    <location>
        <position position="802"/>
    </location>
</feature>
<feature type="glycosylation site" description="N-linked (GlcNAc...) asparagine" evidence="2">
    <location>
        <position position="899"/>
    </location>
</feature>
<feature type="glycosylation site" description="N-linked (GlcNAc...) asparagine" evidence="2">
    <location>
        <position position="919"/>
    </location>
</feature>
<feature type="glycosylation site" description="N-linked (GlcNAc...) asparagine" evidence="2">
    <location>
        <position position="965"/>
    </location>
</feature>
<feature type="glycosylation site" description="N-linked (GlcNAc...) asparagine" evidence="2">
    <location>
        <position position="991"/>
    </location>
</feature>
<feature type="glycosylation site" description="N-linked (GlcNAc...) asparagine" evidence="2">
    <location>
        <position position="1089"/>
    </location>
</feature>
<feature type="glycosylation site" description="N-linked (GlcNAc...) asparagine" evidence="2">
    <location>
        <position position="1196"/>
    </location>
</feature>
<feature type="glycosylation site" description="N-linked (GlcNAc...) asparagine" evidence="2">
    <location>
        <position position="1588"/>
    </location>
</feature>
<feature type="disulfide bond" evidence="1">
    <location>
        <begin position="1594"/>
        <end position="1605"/>
    </location>
</feature>
<feature type="disulfide bond" evidence="1">
    <location>
        <begin position="1599"/>
        <end position="1615"/>
    </location>
</feature>
<feature type="disulfide bond" evidence="1">
    <location>
        <begin position="1617"/>
        <end position="1628"/>
    </location>
</feature>
<feature type="disulfide bond" evidence="1">
    <location>
        <begin position="1636"/>
        <end position="1649"/>
    </location>
</feature>
<feature type="disulfide bond" evidence="1">
    <location>
        <begin position="1643"/>
        <end position="1663"/>
    </location>
</feature>
<feature type="disulfide bond" evidence="1">
    <location>
        <begin position="1665"/>
        <end position="1679"/>
    </location>
</feature>
<reference key="1">
    <citation type="journal article" date="1988" name="Mol. Biochem. Parasitol.">
        <title>Variation in the precursor to the major merozoite surface antigens of Plasmodium falciparum.</title>
        <authorList>
            <person name="Peterson M.G."/>
            <person name="Coppel R.L."/>
            <person name="McIntyre P."/>
            <person name="Langford C.J."/>
            <person name="Woodrow G."/>
            <person name="Brown G.V."/>
            <person name="Anders R.F."/>
            <person name="Kemp D.J."/>
        </authorList>
    </citation>
    <scope>NUCLEOTIDE SEQUENCE [MRNA]</scope>
    <scope>POLYMORPHISM</scope>
</reference>